<evidence type="ECO:0000255" key="1">
    <source>
        <dbReference type="HAMAP-Rule" id="MF_01008"/>
    </source>
</evidence>
<evidence type="ECO:0000255" key="2">
    <source>
        <dbReference type="PROSITE-ProRule" id="PRU01076"/>
    </source>
</evidence>
<organism>
    <name type="scientific">Prosthecochloris aestuarii (strain DSM 271 / SK 413)</name>
    <dbReference type="NCBI Taxonomy" id="290512"/>
    <lineage>
        <taxon>Bacteria</taxon>
        <taxon>Pseudomonadati</taxon>
        <taxon>Chlorobiota</taxon>
        <taxon>Chlorobiia</taxon>
        <taxon>Chlorobiales</taxon>
        <taxon>Chlorobiaceae</taxon>
        <taxon>Prosthecochloris</taxon>
    </lineage>
</organism>
<sequence>MSGFIGKEQHAIDDKGRLMIPARFRRRMTVVPDESLKSSRGSASDAGGLYVMKVPDGSLELYEPSVWAEKEQAIVRLSDFNPDERLLKTLLYESLDCVEMDRQGRIALSREFLQHAGISRDVVIVGANVKMILWAPEKLSKVVRDNASRFQVLAGRYF</sequence>
<comment type="subunit">
    <text evidence="1">Forms oligomers.</text>
</comment>
<comment type="subcellular location">
    <subcellularLocation>
        <location evidence="1">Cytoplasm</location>
        <location evidence="1">Nucleoid</location>
    </subcellularLocation>
</comment>
<comment type="similarity">
    <text evidence="1">Belongs to the MraZ family.</text>
</comment>
<name>MRAZ_PROA2</name>
<proteinExistence type="inferred from homology"/>
<reference key="1">
    <citation type="submission" date="2008-06" db="EMBL/GenBank/DDBJ databases">
        <title>Complete sequence of chromosome of Prosthecochloris aestuarii DSM 271.</title>
        <authorList>
            <consortium name="US DOE Joint Genome Institute"/>
            <person name="Lucas S."/>
            <person name="Copeland A."/>
            <person name="Lapidus A."/>
            <person name="Glavina del Rio T."/>
            <person name="Dalin E."/>
            <person name="Tice H."/>
            <person name="Bruce D."/>
            <person name="Goodwin L."/>
            <person name="Pitluck S."/>
            <person name="Schmutz J."/>
            <person name="Larimer F."/>
            <person name="Land M."/>
            <person name="Hauser L."/>
            <person name="Kyrpides N."/>
            <person name="Anderson I."/>
            <person name="Liu Z."/>
            <person name="Li T."/>
            <person name="Zhao F."/>
            <person name="Overmann J."/>
            <person name="Bryant D.A."/>
            <person name="Richardson P."/>
        </authorList>
    </citation>
    <scope>NUCLEOTIDE SEQUENCE [LARGE SCALE GENOMIC DNA]</scope>
    <source>
        <strain>DSM 271 / SK 413</strain>
    </source>
</reference>
<accession>B4S6R8</accession>
<gene>
    <name evidence="1" type="primary">mraZ</name>
    <name type="ordered locus">Paes_2272</name>
</gene>
<dbReference type="EMBL" id="CP001108">
    <property type="protein sequence ID" value="ACF47273.1"/>
    <property type="molecule type" value="Genomic_DNA"/>
</dbReference>
<dbReference type="RefSeq" id="WP_012506803.1">
    <property type="nucleotide sequence ID" value="NC_011059.1"/>
</dbReference>
<dbReference type="SMR" id="B4S6R8"/>
<dbReference type="STRING" id="290512.Paes_2272"/>
<dbReference type="KEGG" id="paa:Paes_2272"/>
<dbReference type="eggNOG" id="COG2001">
    <property type="taxonomic scope" value="Bacteria"/>
</dbReference>
<dbReference type="HOGENOM" id="CLU_107907_0_5_10"/>
<dbReference type="Proteomes" id="UP000002725">
    <property type="component" value="Chromosome"/>
</dbReference>
<dbReference type="GO" id="GO:0005737">
    <property type="term" value="C:cytoplasm"/>
    <property type="evidence" value="ECO:0007669"/>
    <property type="project" value="UniProtKB-UniRule"/>
</dbReference>
<dbReference type="GO" id="GO:0009295">
    <property type="term" value="C:nucleoid"/>
    <property type="evidence" value="ECO:0007669"/>
    <property type="project" value="UniProtKB-SubCell"/>
</dbReference>
<dbReference type="GO" id="GO:0003700">
    <property type="term" value="F:DNA-binding transcription factor activity"/>
    <property type="evidence" value="ECO:0007669"/>
    <property type="project" value="UniProtKB-UniRule"/>
</dbReference>
<dbReference type="GO" id="GO:0000976">
    <property type="term" value="F:transcription cis-regulatory region binding"/>
    <property type="evidence" value="ECO:0007669"/>
    <property type="project" value="TreeGrafter"/>
</dbReference>
<dbReference type="GO" id="GO:2000143">
    <property type="term" value="P:negative regulation of DNA-templated transcription initiation"/>
    <property type="evidence" value="ECO:0007669"/>
    <property type="project" value="TreeGrafter"/>
</dbReference>
<dbReference type="CDD" id="cd16321">
    <property type="entry name" value="MraZ_C"/>
    <property type="match status" value="1"/>
</dbReference>
<dbReference type="CDD" id="cd16320">
    <property type="entry name" value="MraZ_N"/>
    <property type="match status" value="1"/>
</dbReference>
<dbReference type="Gene3D" id="3.40.1550.20">
    <property type="entry name" value="Transcriptional regulator MraZ domain"/>
    <property type="match status" value="1"/>
</dbReference>
<dbReference type="HAMAP" id="MF_01008">
    <property type="entry name" value="MraZ"/>
    <property type="match status" value="1"/>
</dbReference>
<dbReference type="InterPro" id="IPR003444">
    <property type="entry name" value="MraZ"/>
</dbReference>
<dbReference type="InterPro" id="IPR035644">
    <property type="entry name" value="MraZ_C"/>
</dbReference>
<dbReference type="InterPro" id="IPR020603">
    <property type="entry name" value="MraZ_dom"/>
</dbReference>
<dbReference type="InterPro" id="IPR035642">
    <property type="entry name" value="MraZ_N"/>
</dbReference>
<dbReference type="InterPro" id="IPR038619">
    <property type="entry name" value="MraZ_sf"/>
</dbReference>
<dbReference type="InterPro" id="IPR007159">
    <property type="entry name" value="SpoVT-AbrB_dom"/>
</dbReference>
<dbReference type="InterPro" id="IPR037914">
    <property type="entry name" value="SpoVT-AbrB_sf"/>
</dbReference>
<dbReference type="NCBIfam" id="NF001476">
    <property type="entry name" value="PRK00326.2-2"/>
    <property type="match status" value="1"/>
</dbReference>
<dbReference type="PANTHER" id="PTHR34701">
    <property type="entry name" value="TRANSCRIPTIONAL REGULATOR MRAZ"/>
    <property type="match status" value="1"/>
</dbReference>
<dbReference type="PANTHER" id="PTHR34701:SF1">
    <property type="entry name" value="TRANSCRIPTIONAL REGULATOR MRAZ"/>
    <property type="match status" value="1"/>
</dbReference>
<dbReference type="Pfam" id="PF02381">
    <property type="entry name" value="MraZ"/>
    <property type="match status" value="1"/>
</dbReference>
<dbReference type="SUPFAM" id="SSF89447">
    <property type="entry name" value="AbrB/MazE/MraZ-like"/>
    <property type="match status" value="1"/>
</dbReference>
<dbReference type="PROSITE" id="PS51740">
    <property type="entry name" value="SPOVT_ABRB"/>
    <property type="match status" value="2"/>
</dbReference>
<protein>
    <recommendedName>
        <fullName>Transcriptional regulator MraZ</fullName>
    </recommendedName>
</protein>
<feature type="chain" id="PRO_1000191320" description="Transcriptional regulator MraZ">
    <location>
        <begin position="1"/>
        <end position="158"/>
    </location>
</feature>
<feature type="domain" description="SpoVT-AbrB 1" evidence="2">
    <location>
        <begin position="7"/>
        <end position="66"/>
    </location>
</feature>
<feature type="domain" description="SpoVT-AbrB 2" evidence="2">
    <location>
        <begin position="95"/>
        <end position="138"/>
    </location>
</feature>
<keyword id="KW-0963">Cytoplasm</keyword>
<keyword id="KW-0238">DNA-binding</keyword>
<keyword id="KW-0677">Repeat</keyword>
<keyword id="KW-0804">Transcription</keyword>
<keyword id="KW-0805">Transcription regulation</keyword>